<dbReference type="EMBL" id="BX571859">
    <property type="protein sequence ID" value="CAE12336.1"/>
    <property type="molecule type" value="Genomic_DNA"/>
</dbReference>
<dbReference type="RefSeq" id="WP_011144454.1">
    <property type="nucleotide sequence ID" value="NC_005126.1"/>
</dbReference>
<dbReference type="SMR" id="Q7NA93"/>
<dbReference type="STRING" id="243265.plu0041"/>
<dbReference type="GeneID" id="48846341"/>
<dbReference type="KEGG" id="plu:plu0041"/>
<dbReference type="eggNOG" id="COG0224">
    <property type="taxonomic scope" value="Bacteria"/>
</dbReference>
<dbReference type="HOGENOM" id="CLU_050669_0_1_6"/>
<dbReference type="OrthoDB" id="9812769at2"/>
<dbReference type="Proteomes" id="UP000002514">
    <property type="component" value="Chromosome"/>
</dbReference>
<dbReference type="GO" id="GO:0005886">
    <property type="term" value="C:plasma membrane"/>
    <property type="evidence" value="ECO:0007669"/>
    <property type="project" value="UniProtKB-SubCell"/>
</dbReference>
<dbReference type="GO" id="GO:0045259">
    <property type="term" value="C:proton-transporting ATP synthase complex"/>
    <property type="evidence" value="ECO:0007669"/>
    <property type="project" value="UniProtKB-KW"/>
</dbReference>
<dbReference type="GO" id="GO:0005524">
    <property type="term" value="F:ATP binding"/>
    <property type="evidence" value="ECO:0007669"/>
    <property type="project" value="UniProtKB-UniRule"/>
</dbReference>
<dbReference type="GO" id="GO:0046933">
    <property type="term" value="F:proton-transporting ATP synthase activity, rotational mechanism"/>
    <property type="evidence" value="ECO:0007669"/>
    <property type="project" value="UniProtKB-UniRule"/>
</dbReference>
<dbReference type="GO" id="GO:0042777">
    <property type="term" value="P:proton motive force-driven plasma membrane ATP synthesis"/>
    <property type="evidence" value="ECO:0007669"/>
    <property type="project" value="UniProtKB-UniRule"/>
</dbReference>
<dbReference type="CDD" id="cd12151">
    <property type="entry name" value="F1-ATPase_gamma"/>
    <property type="match status" value="1"/>
</dbReference>
<dbReference type="FunFam" id="1.10.287.80:FF:000005">
    <property type="entry name" value="ATP synthase gamma chain"/>
    <property type="match status" value="2"/>
</dbReference>
<dbReference type="FunFam" id="3.40.1380.10:FF:000001">
    <property type="entry name" value="ATP synthase gamma chain"/>
    <property type="match status" value="1"/>
</dbReference>
<dbReference type="Gene3D" id="3.40.1380.10">
    <property type="match status" value="1"/>
</dbReference>
<dbReference type="Gene3D" id="1.10.287.80">
    <property type="entry name" value="ATP synthase, gamma subunit, helix hairpin domain"/>
    <property type="match status" value="1"/>
</dbReference>
<dbReference type="HAMAP" id="MF_00815">
    <property type="entry name" value="ATP_synth_gamma_bact"/>
    <property type="match status" value="1"/>
</dbReference>
<dbReference type="InterPro" id="IPR035968">
    <property type="entry name" value="ATP_synth_F1_ATPase_gsu"/>
</dbReference>
<dbReference type="InterPro" id="IPR000131">
    <property type="entry name" value="ATP_synth_F1_gsu"/>
</dbReference>
<dbReference type="InterPro" id="IPR023632">
    <property type="entry name" value="ATP_synth_F1_gsu_CS"/>
</dbReference>
<dbReference type="NCBIfam" id="TIGR01146">
    <property type="entry name" value="ATPsyn_F1gamma"/>
    <property type="match status" value="1"/>
</dbReference>
<dbReference type="NCBIfam" id="NF004144">
    <property type="entry name" value="PRK05621.1-1"/>
    <property type="match status" value="1"/>
</dbReference>
<dbReference type="PANTHER" id="PTHR11693">
    <property type="entry name" value="ATP SYNTHASE GAMMA CHAIN"/>
    <property type="match status" value="1"/>
</dbReference>
<dbReference type="PANTHER" id="PTHR11693:SF22">
    <property type="entry name" value="ATP SYNTHASE SUBUNIT GAMMA, MITOCHONDRIAL"/>
    <property type="match status" value="1"/>
</dbReference>
<dbReference type="Pfam" id="PF00231">
    <property type="entry name" value="ATP-synt"/>
    <property type="match status" value="1"/>
</dbReference>
<dbReference type="PRINTS" id="PR00126">
    <property type="entry name" value="ATPASEGAMMA"/>
</dbReference>
<dbReference type="SUPFAM" id="SSF52943">
    <property type="entry name" value="ATP synthase (F1-ATPase), gamma subunit"/>
    <property type="match status" value="1"/>
</dbReference>
<dbReference type="PROSITE" id="PS00153">
    <property type="entry name" value="ATPASE_GAMMA"/>
    <property type="match status" value="1"/>
</dbReference>
<proteinExistence type="inferred from homology"/>
<sequence>MAGAKEIRTKIASVQNTQKITKAMEMVAASKMRKTQDRMAASRPYAETIRSVIGHLALGNLEYKHPYLEERETKRVGYLVVSTDRGLCGGLNTNLFKKLLSEMKDWSDKDVQCELALIGSKATSFFASVGGNVVAQVTGMGDNPSLSELIGPVNIMLRAYDEGRLDKLYVVTNKFINTMSQEPTITQLLPLPAGDDETLKKKSWDYLYEPDPKALLDILLRRYVESQVYQGVVENLASEQAARMVAMKAATDNGGSLIKELQLVYNKARQASITQELTEIVSGASAV</sequence>
<gene>
    <name evidence="1" type="primary">atpG</name>
    <name type="ordered locus">plu0041</name>
</gene>
<organism>
    <name type="scientific">Photorhabdus laumondii subsp. laumondii (strain DSM 15139 / CIP 105565 / TT01)</name>
    <name type="common">Photorhabdus luminescens subsp. laumondii</name>
    <dbReference type="NCBI Taxonomy" id="243265"/>
    <lineage>
        <taxon>Bacteria</taxon>
        <taxon>Pseudomonadati</taxon>
        <taxon>Pseudomonadota</taxon>
        <taxon>Gammaproteobacteria</taxon>
        <taxon>Enterobacterales</taxon>
        <taxon>Morganellaceae</taxon>
        <taxon>Photorhabdus</taxon>
    </lineage>
</organism>
<comment type="function">
    <text evidence="1">Produces ATP from ADP in the presence of a proton gradient across the membrane. The gamma chain is believed to be important in regulating ATPase activity and the flow of protons through the CF(0) complex.</text>
</comment>
<comment type="subunit">
    <text evidence="1">F-type ATPases have 2 components, CF(1) - the catalytic core - and CF(0) - the membrane proton channel. CF(1) has five subunits: alpha(3), beta(3), gamma(1), delta(1), epsilon(1). CF(0) has three main subunits: a, b and c.</text>
</comment>
<comment type="subcellular location">
    <subcellularLocation>
        <location evidence="1">Cell inner membrane</location>
        <topology evidence="1">Peripheral membrane protein</topology>
    </subcellularLocation>
</comment>
<comment type="similarity">
    <text evidence="1">Belongs to the ATPase gamma chain family.</text>
</comment>
<accession>Q7NA93</accession>
<protein>
    <recommendedName>
        <fullName evidence="1">ATP synthase gamma chain</fullName>
    </recommendedName>
    <alternativeName>
        <fullName evidence="1">ATP synthase F1 sector gamma subunit</fullName>
    </alternativeName>
    <alternativeName>
        <fullName evidence="1">F-ATPase gamma subunit</fullName>
    </alternativeName>
</protein>
<feature type="chain" id="PRO_0000073339" description="ATP synthase gamma chain">
    <location>
        <begin position="1"/>
        <end position="287"/>
    </location>
</feature>
<name>ATPG_PHOLL</name>
<keyword id="KW-0066">ATP synthesis</keyword>
<keyword id="KW-0997">Cell inner membrane</keyword>
<keyword id="KW-1003">Cell membrane</keyword>
<keyword id="KW-0139">CF(1)</keyword>
<keyword id="KW-0375">Hydrogen ion transport</keyword>
<keyword id="KW-0406">Ion transport</keyword>
<keyword id="KW-0472">Membrane</keyword>
<keyword id="KW-1185">Reference proteome</keyword>
<keyword id="KW-0813">Transport</keyword>
<evidence type="ECO:0000255" key="1">
    <source>
        <dbReference type="HAMAP-Rule" id="MF_00815"/>
    </source>
</evidence>
<reference key="1">
    <citation type="journal article" date="2003" name="Nat. Biotechnol.">
        <title>The genome sequence of the entomopathogenic bacterium Photorhabdus luminescens.</title>
        <authorList>
            <person name="Duchaud E."/>
            <person name="Rusniok C."/>
            <person name="Frangeul L."/>
            <person name="Buchrieser C."/>
            <person name="Givaudan A."/>
            <person name="Taourit S."/>
            <person name="Bocs S."/>
            <person name="Boursaux-Eude C."/>
            <person name="Chandler M."/>
            <person name="Charles J.-F."/>
            <person name="Dassa E."/>
            <person name="Derose R."/>
            <person name="Derzelle S."/>
            <person name="Freyssinet G."/>
            <person name="Gaudriault S."/>
            <person name="Medigue C."/>
            <person name="Lanois A."/>
            <person name="Powell K."/>
            <person name="Siguier P."/>
            <person name="Vincent R."/>
            <person name="Wingate V."/>
            <person name="Zouine M."/>
            <person name="Glaser P."/>
            <person name="Boemare N."/>
            <person name="Danchin A."/>
            <person name="Kunst F."/>
        </authorList>
    </citation>
    <scope>NUCLEOTIDE SEQUENCE [LARGE SCALE GENOMIC DNA]</scope>
    <source>
        <strain>DSM 15139 / CIP 105565 / TT01</strain>
    </source>
</reference>